<organism>
    <name type="scientific">Salmonella arizonae (strain ATCC BAA-731 / CDC346-86 / RSK2980)</name>
    <dbReference type="NCBI Taxonomy" id="41514"/>
    <lineage>
        <taxon>Bacteria</taxon>
        <taxon>Pseudomonadati</taxon>
        <taxon>Pseudomonadota</taxon>
        <taxon>Gammaproteobacteria</taxon>
        <taxon>Enterobacterales</taxon>
        <taxon>Enterobacteriaceae</taxon>
        <taxon>Salmonella</taxon>
    </lineage>
</organism>
<feature type="chain" id="PRO_1000083287" description="Replication restart protein PriB">
    <location>
        <begin position="1"/>
        <end position="104"/>
    </location>
</feature>
<feature type="domain" description="SSB" evidence="1">
    <location>
        <begin position="1"/>
        <end position="101"/>
    </location>
</feature>
<dbReference type="EMBL" id="CP000880">
    <property type="protein sequence ID" value="ABX23076.1"/>
    <property type="molecule type" value="Genomic_DNA"/>
</dbReference>
<dbReference type="SMR" id="A9MFL0"/>
<dbReference type="STRING" id="41514.SARI_03240"/>
<dbReference type="KEGG" id="ses:SARI_03240"/>
<dbReference type="HOGENOM" id="CLU_166075_0_0_6"/>
<dbReference type="Proteomes" id="UP000002084">
    <property type="component" value="Chromosome"/>
</dbReference>
<dbReference type="GO" id="GO:1990077">
    <property type="term" value="C:primosome complex"/>
    <property type="evidence" value="ECO:0007669"/>
    <property type="project" value="UniProtKB-KW"/>
</dbReference>
<dbReference type="GO" id="GO:0003697">
    <property type="term" value="F:single-stranded DNA binding"/>
    <property type="evidence" value="ECO:0007669"/>
    <property type="project" value="UniProtKB-UniRule"/>
</dbReference>
<dbReference type="GO" id="GO:0006269">
    <property type="term" value="P:DNA replication, synthesis of primer"/>
    <property type="evidence" value="ECO:0007669"/>
    <property type="project" value="UniProtKB-KW"/>
</dbReference>
<dbReference type="CDD" id="cd04496">
    <property type="entry name" value="SSB_OBF"/>
    <property type="match status" value="1"/>
</dbReference>
<dbReference type="FunFam" id="2.40.50.140:FF:000077">
    <property type="entry name" value="Primosomal replication protein N"/>
    <property type="match status" value="1"/>
</dbReference>
<dbReference type="Gene3D" id="2.40.50.140">
    <property type="entry name" value="Nucleic acid-binding proteins"/>
    <property type="match status" value="1"/>
</dbReference>
<dbReference type="HAMAP" id="MF_00720">
    <property type="entry name" value="PriB"/>
    <property type="match status" value="1"/>
</dbReference>
<dbReference type="InterPro" id="IPR012340">
    <property type="entry name" value="NA-bd_OB-fold"/>
</dbReference>
<dbReference type="InterPro" id="IPR000424">
    <property type="entry name" value="Primosome_PriB/ssb"/>
</dbReference>
<dbReference type="InterPro" id="IPR023646">
    <property type="entry name" value="Prisomal_replication_PriB"/>
</dbReference>
<dbReference type="NCBIfam" id="TIGR04418">
    <property type="entry name" value="PriB_gamma"/>
    <property type="match status" value="1"/>
</dbReference>
<dbReference type="Pfam" id="PF22657">
    <property type="entry name" value="SSB_1"/>
    <property type="match status" value="1"/>
</dbReference>
<dbReference type="PIRSF" id="PIRSF003135">
    <property type="entry name" value="Primosomal_n"/>
    <property type="match status" value="1"/>
</dbReference>
<dbReference type="SUPFAM" id="SSF50249">
    <property type="entry name" value="Nucleic acid-binding proteins"/>
    <property type="match status" value="1"/>
</dbReference>
<dbReference type="PROSITE" id="PS50935">
    <property type="entry name" value="SSB"/>
    <property type="match status" value="1"/>
</dbReference>
<evidence type="ECO:0000255" key="1">
    <source>
        <dbReference type="HAMAP-Rule" id="MF_00720"/>
    </source>
</evidence>
<reference key="1">
    <citation type="submission" date="2007-11" db="EMBL/GenBank/DDBJ databases">
        <authorList>
            <consortium name="The Salmonella enterica serovar Arizonae Genome Sequencing Project"/>
            <person name="McClelland M."/>
            <person name="Sanderson E.K."/>
            <person name="Porwollik S."/>
            <person name="Spieth J."/>
            <person name="Clifton W.S."/>
            <person name="Fulton R."/>
            <person name="Chunyan W."/>
            <person name="Wollam A."/>
            <person name="Shah N."/>
            <person name="Pepin K."/>
            <person name="Bhonagiri V."/>
            <person name="Nash W."/>
            <person name="Johnson M."/>
            <person name="Thiruvilangam P."/>
            <person name="Wilson R."/>
        </authorList>
    </citation>
    <scope>NUCLEOTIDE SEQUENCE [LARGE SCALE GENOMIC DNA]</scope>
    <source>
        <strain>ATCC BAA-731 / CDC346-86 / RSK2980</strain>
    </source>
</reference>
<comment type="function">
    <text evidence="1">Involved in the restart of stalled replication forks, which reloads the replicative helicase on sites other than the origin of replication; the PriA-PriB pathway is the major replication restart pathway. During primosome assembly it facilitates complex formation between PriA and DnaT on DNA; stabilizes PriA on DNA. Stimulates the DNA unwinding activity of PriA helicase.</text>
</comment>
<comment type="subunit">
    <text evidence="1">Homodimer. Interacts with PriA and DnaT. Component of the replication restart primosome. Primosome assembly occurs via a 'hand-off' mechanism. PriA binds to replication forks, subsequently PriB then DnaT bind; DnaT then displaces ssDNA to generate the helicase loading substrate.</text>
</comment>
<comment type="similarity">
    <text evidence="1">Belongs to the PriB family.</text>
</comment>
<proteinExistence type="inferred from homology"/>
<accession>A9MFL0</accession>
<protein>
    <recommendedName>
        <fullName evidence="1">Replication restart protein PriB</fullName>
    </recommendedName>
</protein>
<keyword id="KW-0235">DNA replication</keyword>
<keyword id="KW-0238">DNA-binding</keyword>
<keyword id="KW-0639">Primosome</keyword>
<keyword id="KW-1185">Reference proteome</keyword>
<gene>
    <name evidence="1" type="primary">priB</name>
    <name type="ordered locus">SARI_03240</name>
</gene>
<name>PRIB_SALAR</name>
<sequence length="104" mass="11414">MTNRLALSGTVCRAPLRKVSPSGIPHCQFVLEHRSVQEEAGFHRQAWCQMPVIVSGHENQAITHSITVGSRITVQGFISCHKAKNGLSKMVLHAEQIELIDSGD</sequence>